<gene>
    <name evidence="1" type="primary">rpsP</name>
</gene>
<accession>Q9L9C8</accession>
<sequence length="86" mass="9511">MVVIRMARGGAKKRPFYHIVVADSRSRRDGRFIERLGFYNPIGAVAELRIDKERAAYWLSQGAQPSDTVAGFLKKEGVSKTGVASV</sequence>
<organism>
    <name type="scientific">Acidithiobacillus ferridurans</name>
    <dbReference type="NCBI Taxonomy" id="1232575"/>
    <lineage>
        <taxon>Bacteria</taxon>
        <taxon>Pseudomonadati</taxon>
        <taxon>Pseudomonadota</taxon>
        <taxon>Acidithiobacillia</taxon>
        <taxon>Acidithiobacillales</taxon>
        <taxon>Acidithiobacillaceae</taxon>
        <taxon>Acidithiobacillus</taxon>
    </lineage>
</organism>
<comment type="similarity">
    <text evidence="1">Belongs to the bacterial ribosomal protein bS16 family.</text>
</comment>
<feature type="chain" id="PRO_0000167272" description="Small ribosomal subunit protein bS16">
    <location>
        <begin position="1"/>
        <end position="86"/>
    </location>
</feature>
<keyword id="KW-0687">Ribonucleoprotein</keyword>
<keyword id="KW-0689">Ribosomal protein</keyword>
<reference key="1">
    <citation type="journal article" date="2000" name="Appl. Environ. Microbiol.">
        <title>The chromosomal arsenic resistance genes of Thiobacillus ferrooxidans have an unusual arrangement and confer increased arsenic and antimony resistance to Escherichia coli.</title>
        <authorList>
            <person name="Butcher B.G."/>
            <person name="Deane S.M."/>
            <person name="Rawlings D.E."/>
        </authorList>
    </citation>
    <scope>NUCLEOTIDE SEQUENCE [GENOMIC DNA]</scope>
    <source>
        <strain>ATCC 33020 / DSM 29468 / JCM 18981 / 11Fe</strain>
    </source>
</reference>
<name>RS16_ACIFI</name>
<protein>
    <recommendedName>
        <fullName evidence="1">Small ribosomal subunit protein bS16</fullName>
    </recommendedName>
    <alternativeName>
        <fullName evidence="2">30S ribosomal protein S16</fullName>
    </alternativeName>
</protein>
<proteinExistence type="inferred from homology"/>
<dbReference type="EMBL" id="AF173880">
    <property type="protein sequence ID" value="AAF69243.1"/>
    <property type="molecule type" value="Genomic_DNA"/>
</dbReference>
<dbReference type="SMR" id="Q9L9C8"/>
<dbReference type="GO" id="GO:0005737">
    <property type="term" value="C:cytoplasm"/>
    <property type="evidence" value="ECO:0007669"/>
    <property type="project" value="UniProtKB-ARBA"/>
</dbReference>
<dbReference type="GO" id="GO:0015935">
    <property type="term" value="C:small ribosomal subunit"/>
    <property type="evidence" value="ECO:0007669"/>
    <property type="project" value="TreeGrafter"/>
</dbReference>
<dbReference type="GO" id="GO:0003735">
    <property type="term" value="F:structural constituent of ribosome"/>
    <property type="evidence" value="ECO:0007669"/>
    <property type="project" value="InterPro"/>
</dbReference>
<dbReference type="GO" id="GO:0006412">
    <property type="term" value="P:translation"/>
    <property type="evidence" value="ECO:0007669"/>
    <property type="project" value="UniProtKB-UniRule"/>
</dbReference>
<dbReference type="Gene3D" id="3.30.1320.10">
    <property type="match status" value="1"/>
</dbReference>
<dbReference type="HAMAP" id="MF_00385">
    <property type="entry name" value="Ribosomal_bS16"/>
    <property type="match status" value="1"/>
</dbReference>
<dbReference type="InterPro" id="IPR000307">
    <property type="entry name" value="Ribosomal_bS16"/>
</dbReference>
<dbReference type="InterPro" id="IPR023803">
    <property type="entry name" value="Ribosomal_bS16_dom_sf"/>
</dbReference>
<dbReference type="NCBIfam" id="TIGR00002">
    <property type="entry name" value="S16"/>
    <property type="match status" value="1"/>
</dbReference>
<dbReference type="PANTHER" id="PTHR12919">
    <property type="entry name" value="30S RIBOSOMAL PROTEIN S16"/>
    <property type="match status" value="1"/>
</dbReference>
<dbReference type="PANTHER" id="PTHR12919:SF20">
    <property type="entry name" value="SMALL RIBOSOMAL SUBUNIT PROTEIN BS16M"/>
    <property type="match status" value="1"/>
</dbReference>
<dbReference type="Pfam" id="PF00886">
    <property type="entry name" value="Ribosomal_S16"/>
    <property type="match status" value="1"/>
</dbReference>
<dbReference type="SUPFAM" id="SSF54565">
    <property type="entry name" value="Ribosomal protein S16"/>
    <property type="match status" value="1"/>
</dbReference>
<evidence type="ECO:0000255" key="1">
    <source>
        <dbReference type="HAMAP-Rule" id="MF_00385"/>
    </source>
</evidence>
<evidence type="ECO:0000305" key="2"/>